<organism>
    <name type="scientific">Streptococcus gordonii (strain Challis / ATCC 35105 / BCRC 15272 / CH1 / DL1 / V288)</name>
    <dbReference type="NCBI Taxonomy" id="467705"/>
    <lineage>
        <taxon>Bacteria</taxon>
        <taxon>Bacillati</taxon>
        <taxon>Bacillota</taxon>
        <taxon>Bacilli</taxon>
        <taxon>Lactobacillales</taxon>
        <taxon>Streptococcaceae</taxon>
        <taxon>Streptococcus</taxon>
    </lineage>
</organism>
<sequence>MLFEQIAANKRRTWFLLVAFFALLALIGAAAGYLWMNSPLGGVIIAFIIGLIYAITMIFQSTEVVMSMNGARQVSEQEAPELYHIVQDMAMVAQIPMPRVYIVEDDSPNAFATGSNPENAAVAATTGLLRLMNREELEGVIGHEVSHIRNYDIRISTIAVALASAITMISSVAGRMMWYGGGRRRNDRDDDSGLGLLMLVFSLIAIILAPLAATLVQLAISRQREFLADASSVELTRNPQGMIRALQKLDNSEPMHRHVDDASAALYISDPKKKGGLQKLFYTHPPISERVERLRKM</sequence>
<name>HTPX_STRGC</name>
<keyword id="KW-1003">Cell membrane</keyword>
<keyword id="KW-0378">Hydrolase</keyword>
<keyword id="KW-0472">Membrane</keyword>
<keyword id="KW-0479">Metal-binding</keyword>
<keyword id="KW-0482">Metalloprotease</keyword>
<keyword id="KW-0645">Protease</keyword>
<keyword id="KW-1185">Reference proteome</keyword>
<keyword id="KW-0812">Transmembrane</keyword>
<keyword id="KW-1133">Transmembrane helix</keyword>
<keyword id="KW-0862">Zinc</keyword>
<evidence type="ECO:0000250" key="1"/>
<evidence type="ECO:0000255" key="2"/>
<evidence type="ECO:0000269" key="3">
    <source>
    </source>
</evidence>
<evidence type="ECO:0000305" key="4"/>
<dbReference type="EC" id="3.4.24.-"/>
<dbReference type="EMBL" id="AF017421">
    <property type="protein sequence ID" value="AAB70525.1"/>
    <property type="molecule type" value="Genomic_DNA"/>
</dbReference>
<dbReference type="EMBL" id="CP000725">
    <property type="protein sequence ID" value="ABV10968.1"/>
    <property type="molecule type" value="Genomic_DNA"/>
</dbReference>
<dbReference type="PIR" id="T48855">
    <property type="entry name" value="T48855"/>
</dbReference>
<dbReference type="RefSeq" id="WP_012000001.1">
    <property type="nucleotide sequence ID" value="NC_009785.1"/>
</dbReference>
<dbReference type="SMR" id="O30795"/>
<dbReference type="STRING" id="467705.SGO_0495"/>
<dbReference type="KEGG" id="sgo:SGO_0495"/>
<dbReference type="eggNOG" id="COG0501">
    <property type="taxonomic scope" value="Bacteria"/>
</dbReference>
<dbReference type="HOGENOM" id="CLU_042266_2_1_9"/>
<dbReference type="Proteomes" id="UP000001131">
    <property type="component" value="Chromosome"/>
</dbReference>
<dbReference type="GO" id="GO:0005886">
    <property type="term" value="C:plasma membrane"/>
    <property type="evidence" value="ECO:0007669"/>
    <property type="project" value="UniProtKB-SubCell"/>
</dbReference>
<dbReference type="GO" id="GO:0004222">
    <property type="term" value="F:metalloendopeptidase activity"/>
    <property type="evidence" value="ECO:0007669"/>
    <property type="project" value="UniProtKB-UniRule"/>
</dbReference>
<dbReference type="GO" id="GO:0008270">
    <property type="term" value="F:zinc ion binding"/>
    <property type="evidence" value="ECO:0007669"/>
    <property type="project" value="UniProtKB-UniRule"/>
</dbReference>
<dbReference type="GO" id="GO:0006508">
    <property type="term" value="P:proteolysis"/>
    <property type="evidence" value="ECO:0007669"/>
    <property type="project" value="UniProtKB-KW"/>
</dbReference>
<dbReference type="CDD" id="cd07340">
    <property type="entry name" value="M48B_Htpx_like"/>
    <property type="match status" value="1"/>
</dbReference>
<dbReference type="Gene3D" id="3.30.2010.10">
    <property type="entry name" value="Metalloproteases ('zincins'), catalytic domain"/>
    <property type="match status" value="1"/>
</dbReference>
<dbReference type="HAMAP" id="MF_00188">
    <property type="entry name" value="Pept_M48_protease_HtpX"/>
    <property type="match status" value="1"/>
</dbReference>
<dbReference type="InterPro" id="IPR050083">
    <property type="entry name" value="HtpX_protease"/>
</dbReference>
<dbReference type="InterPro" id="IPR022919">
    <property type="entry name" value="Pept_M48_protease_HtpX"/>
</dbReference>
<dbReference type="InterPro" id="IPR001915">
    <property type="entry name" value="Peptidase_M48"/>
</dbReference>
<dbReference type="NCBIfam" id="NF003425">
    <property type="entry name" value="PRK04897.1"/>
    <property type="match status" value="1"/>
</dbReference>
<dbReference type="PANTHER" id="PTHR43221">
    <property type="entry name" value="PROTEASE HTPX"/>
    <property type="match status" value="1"/>
</dbReference>
<dbReference type="PANTHER" id="PTHR43221:SF1">
    <property type="entry name" value="PROTEASE HTPX"/>
    <property type="match status" value="1"/>
</dbReference>
<dbReference type="Pfam" id="PF01435">
    <property type="entry name" value="Peptidase_M48"/>
    <property type="match status" value="1"/>
</dbReference>
<protein>
    <recommendedName>
        <fullName>Protease HtpX homolog</fullName>
        <ecNumber>3.4.24.-</ecNumber>
    </recommendedName>
</protein>
<proteinExistence type="evidence at transcript level"/>
<feature type="chain" id="PRO_0000138894" description="Protease HtpX homolog">
    <location>
        <begin position="1"/>
        <end position="297"/>
    </location>
</feature>
<feature type="transmembrane region" description="Helical" evidence="2">
    <location>
        <begin position="14"/>
        <end position="34"/>
    </location>
</feature>
<feature type="transmembrane region" description="Helical" evidence="2">
    <location>
        <begin position="39"/>
        <end position="59"/>
    </location>
</feature>
<feature type="transmembrane region" description="Helical" evidence="2">
    <location>
        <begin position="158"/>
        <end position="178"/>
    </location>
</feature>
<feature type="transmembrane region" description="Helical" evidence="2">
    <location>
        <begin position="196"/>
        <end position="216"/>
    </location>
</feature>
<feature type="active site" evidence="1">
    <location>
        <position position="144"/>
    </location>
</feature>
<feature type="binding site" evidence="1">
    <location>
        <position position="143"/>
    </location>
    <ligand>
        <name>Zn(2+)</name>
        <dbReference type="ChEBI" id="CHEBI:29105"/>
        <note>catalytic</note>
    </ligand>
</feature>
<feature type="binding site" evidence="1">
    <location>
        <position position="147"/>
    </location>
    <ligand>
        <name>Zn(2+)</name>
        <dbReference type="ChEBI" id="CHEBI:29105"/>
        <note>catalytic</note>
    </ligand>
</feature>
<feature type="binding site" evidence="1">
    <location>
        <position position="225"/>
    </location>
    <ligand>
        <name>Zn(2+)</name>
        <dbReference type="ChEBI" id="CHEBI:29105"/>
        <note>catalytic</note>
    </ligand>
</feature>
<accession>O30795</accession>
<accession>A8AVK1</accession>
<reference key="1">
    <citation type="journal article" date="2002" name="Oral Microbiol. Immunol.">
        <title>Initial characterization of the Streptococcus gordonii htpX gene.</title>
        <authorList>
            <person name="Vickerman M.M."/>
            <person name="Mather N.M."/>
            <person name="Minick P.E."/>
            <person name="Edwards C.A."/>
        </authorList>
    </citation>
    <scope>NUCLEOTIDE SEQUENCE [GENOMIC DNA]</scope>
    <scope>INDUCTION</scope>
    <scope>OPERON STRUCTURE</scope>
    <scope>DISRUPTION PHENOTYPE</scope>
</reference>
<reference key="2">
    <citation type="journal article" date="2007" name="J. Bacteriol.">
        <title>Genome-wide transcriptional changes in Streptococcus gordonii in response to competence signaling peptide.</title>
        <authorList>
            <person name="Vickerman M.M."/>
            <person name="Iobst S."/>
            <person name="Jesionowski A.M."/>
            <person name="Gill S.R."/>
        </authorList>
    </citation>
    <scope>NUCLEOTIDE SEQUENCE [LARGE SCALE GENOMIC DNA]</scope>
    <source>
        <strain>Challis / ATCC 35105 / BCRC 15272 / CH1 / DL1 / V288</strain>
    </source>
</reference>
<gene>
    <name type="primary">htpX</name>
    <name type="ordered locus">SGO_0495</name>
</gene>
<comment type="cofactor">
    <cofactor evidence="1">
        <name>Zn(2+)</name>
        <dbReference type="ChEBI" id="CHEBI:29105"/>
    </cofactor>
    <text evidence="1">Binds 1 zinc ion per subunit.</text>
</comment>
<comment type="subcellular location">
    <subcellularLocation>
        <location evidence="1">Cell membrane</location>
        <topology evidence="1">Multi-pass membrane protein</topology>
    </subcellularLocation>
</comment>
<comment type="induction">
    <text evidence="3">Expression is maximal during the early to mid-log stage of growth and decreases after. Does not respond to heat shock up to 43 degrees Celsius. Part of the lemA-htpX operon.</text>
</comment>
<comment type="disruption phenotype">
    <text evidence="3">No effect on extracellular glucosyltransferase activity, nor on growth characteristics. Deletion does however alter cell surface appearance, making cells rougher at 41.5 degrees Celsius. They are also slightly less adhesive on hydroxyapatite.</text>
</comment>
<comment type="similarity">
    <text evidence="4">Belongs to the peptidase M48B family.</text>
</comment>